<gene>
    <name evidence="1" type="primary">topA</name>
</gene>
<reference key="1">
    <citation type="submission" date="1997-04" db="EMBL/GenBank/DDBJ databases">
        <title>DNA topoisomerases I from thermophilic eubacteria: cloning and sequencing of the DNA topoisomerase I from Fervidobacterium islandicum.</title>
        <authorList>
            <person name="Kaltoum H."/>
            <person name="Portemer C."/>
            <person name="Confalonieri F."/>
            <person name="Duguet M."/>
            <person name="Bouthier de La Tour C."/>
        </authorList>
    </citation>
    <scope>NUCLEOTIDE SEQUENCE [GENOMIC DNA]</scope>
</reference>
<keyword id="KW-0238">DNA-binding</keyword>
<keyword id="KW-0413">Isomerase</keyword>
<keyword id="KW-0460">Magnesium</keyword>
<keyword id="KW-0479">Metal-binding</keyword>
<keyword id="KW-0799">Topoisomerase</keyword>
<keyword id="KW-0862">Zinc</keyword>
<keyword id="KW-0863">Zinc-finger</keyword>
<dbReference type="EC" id="5.6.2.1" evidence="1"/>
<dbReference type="EMBL" id="U97022">
    <property type="protein sequence ID" value="AAB68788.1"/>
    <property type="molecule type" value="Genomic_DNA"/>
</dbReference>
<dbReference type="SMR" id="O34204"/>
<dbReference type="STRING" id="2423.NA23_06330"/>
<dbReference type="eggNOG" id="COG0550">
    <property type="taxonomic scope" value="Bacteria"/>
</dbReference>
<dbReference type="GO" id="GO:0003677">
    <property type="term" value="F:DNA binding"/>
    <property type="evidence" value="ECO:0007669"/>
    <property type="project" value="UniProtKB-KW"/>
</dbReference>
<dbReference type="GO" id="GO:0003917">
    <property type="term" value="F:DNA topoisomerase type I (single strand cut, ATP-independent) activity"/>
    <property type="evidence" value="ECO:0007669"/>
    <property type="project" value="UniProtKB-UniRule"/>
</dbReference>
<dbReference type="GO" id="GO:0008270">
    <property type="term" value="F:zinc ion binding"/>
    <property type="evidence" value="ECO:0007669"/>
    <property type="project" value="UniProtKB-KW"/>
</dbReference>
<dbReference type="GO" id="GO:0006265">
    <property type="term" value="P:DNA topological change"/>
    <property type="evidence" value="ECO:0007669"/>
    <property type="project" value="UniProtKB-UniRule"/>
</dbReference>
<dbReference type="CDD" id="cd00186">
    <property type="entry name" value="TOP1Ac"/>
    <property type="match status" value="1"/>
</dbReference>
<dbReference type="CDD" id="cd03363">
    <property type="entry name" value="TOPRIM_TopoIA_TopoI"/>
    <property type="match status" value="1"/>
</dbReference>
<dbReference type="Gene3D" id="3.40.50.140">
    <property type="match status" value="1"/>
</dbReference>
<dbReference type="Gene3D" id="1.10.460.10">
    <property type="entry name" value="Topoisomerase I, domain 2"/>
    <property type="match status" value="1"/>
</dbReference>
<dbReference type="Gene3D" id="2.70.20.10">
    <property type="entry name" value="Topoisomerase I, domain 3"/>
    <property type="match status" value="1"/>
</dbReference>
<dbReference type="Gene3D" id="1.10.290.10">
    <property type="entry name" value="Topoisomerase I, domain 4"/>
    <property type="match status" value="1"/>
</dbReference>
<dbReference type="HAMAP" id="MF_00952">
    <property type="entry name" value="Topoisom_1_prok"/>
    <property type="match status" value="1"/>
</dbReference>
<dbReference type="InterPro" id="IPR000380">
    <property type="entry name" value="Topo_IA"/>
</dbReference>
<dbReference type="InterPro" id="IPR003601">
    <property type="entry name" value="Topo_IA_2"/>
</dbReference>
<dbReference type="InterPro" id="IPR023406">
    <property type="entry name" value="Topo_IA_AS"/>
</dbReference>
<dbReference type="InterPro" id="IPR013497">
    <property type="entry name" value="Topo_IA_cen"/>
</dbReference>
<dbReference type="InterPro" id="IPR013824">
    <property type="entry name" value="Topo_IA_cen_sub1"/>
</dbReference>
<dbReference type="InterPro" id="IPR013825">
    <property type="entry name" value="Topo_IA_cen_sub2"/>
</dbReference>
<dbReference type="InterPro" id="IPR013826">
    <property type="entry name" value="Topo_IA_cen_sub3"/>
</dbReference>
<dbReference type="InterPro" id="IPR023405">
    <property type="entry name" value="Topo_IA_core_domain"/>
</dbReference>
<dbReference type="InterPro" id="IPR003602">
    <property type="entry name" value="Topo_IA_DNA-bd_dom"/>
</dbReference>
<dbReference type="InterPro" id="IPR005733">
    <property type="entry name" value="TopoI_bac-type"/>
</dbReference>
<dbReference type="InterPro" id="IPR028612">
    <property type="entry name" value="Topoisom_1_IA"/>
</dbReference>
<dbReference type="InterPro" id="IPR006171">
    <property type="entry name" value="TOPRIM_dom"/>
</dbReference>
<dbReference type="InterPro" id="IPR034149">
    <property type="entry name" value="TOPRIM_TopoI"/>
</dbReference>
<dbReference type="NCBIfam" id="TIGR01051">
    <property type="entry name" value="topA_bact"/>
    <property type="match status" value="1"/>
</dbReference>
<dbReference type="PANTHER" id="PTHR42785:SF1">
    <property type="entry name" value="DNA TOPOISOMERASE"/>
    <property type="match status" value="1"/>
</dbReference>
<dbReference type="PANTHER" id="PTHR42785">
    <property type="entry name" value="DNA TOPOISOMERASE, TYPE IA, CORE"/>
    <property type="match status" value="1"/>
</dbReference>
<dbReference type="Pfam" id="PF01131">
    <property type="entry name" value="Topoisom_bac"/>
    <property type="match status" value="1"/>
</dbReference>
<dbReference type="Pfam" id="PF01751">
    <property type="entry name" value="Toprim"/>
    <property type="match status" value="1"/>
</dbReference>
<dbReference type="PRINTS" id="PR00417">
    <property type="entry name" value="PRTPISMRASEI"/>
</dbReference>
<dbReference type="SMART" id="SM00437">
    <property type="entry name" value="TOP1Ac"/>
    <property type="match status" value="1"/>
</dbReference>
<dbReference type="SMART" id="SM00436">
    <property type="entry name" value="TOP1Bc"/>
    <property type="match status" value="1"/>
</dbReference>
<dbReference type="SMART" id="SM00493">
    <property type="entry name" value="TOPRIM"/>
    <property type="match status" value="1"/>
</dbReference>
<dbReference type="SUPFAM" id="SSF56712">
    <property type="entry name" value="Prokaryotic type I DNA topoisomerase"/>
    <property type="match status" value="1"/>
</dbReference>
<dbReference type="PROSITE" id="PS00396">
    <property type="entry name" value="TOPO_IA_1"/>
    <property type="match status" value="1"/>
</dbReference>
<dbReference type="PROSITE" id="PS52039">
    <property type="entry name" value="TOPO_IA_2"/>
    <property type="match status" value="1"/>
</dbReference>
<dbReference type="PROSITE" id="PS50880">
    <property type="entry name" value="TOPRIM"/>
    <property type="match status" value="1"/>
</dbReference>
<name>TOP1_FERIS</name>
<organism>
    <name type="scientific">Fervidobacterium islandicum</name>
    <dbReference type="NCBI Taxonomy" id="2423"/>
    <lineage>
        <taxon>Bacteria</taxon>
        <taxon>Thermotogati</taxon>
        <taxon>Thermotogota</taxon>
        <taxon>Thermotogae</taxon>
        <taxon>Thermotogales</taxon>
        <taxon>Fervidobacteriaceae</taxon>
        <taxon>Fervidobacterium</taxon>
    </lineage>
</organism>
<evidence type="ECO:0000255" key="1">
    <source>
        <dbReference type="HAMAP-Rule" id="MF_00952"/>
    </source>
</evidence>
<evidence type="ECO:0000255" key="2">
    <source>
        <dbReference type="PROSITE-ProRule" id="PRU01383"/>
    </source>
</evidence>
<evidence type="ECO:0000256" key="3">
    <source>
        <dbReference type="SAM" id="MobiDB-lite"/>
    </source>
</evidence>
<protein>
    <recommendedName>
        <fullName evidence="1">DNA topoisomerase 1</fullName>
        <ecNumber evidence="1">5.6.2.1</ecNumber>
    </recommendedName>
    <alternativeName>
        <fullName evidence="1">DNA topoisomerase I</fullName>
    </alternativeName>
    <alternativeName>
        <fullName>Omega-protein</fullName>
    </alternativeName>
    <alternativeName>
        <fullName>Relaxing enzyme</fullName>
    </alternativeName>
    <alternativeName>
        <fullName>Swivelase</fullName>
    </alternativeName>
    <alternativeName>
        <fullName>Untwisting enzyme</fullName>
    </alternativeName>
</protein>
<feature type="chain" id="PRO_0000145148" description="DNA topoisomerase 1">
    <location>
        <begin position="1"/>
        <end position="699"/>
    </location>
</feature>
<feature type="domain" description="Toprim" evidence="1">
    <location>
        <begin position="38"/>
        <end position="146"/>
    </location>
</feature>
<feature type="domain" description="Topo IA-type catalytic" evidence="2">
    <location>
        <begin position="160"/>
        <end position="583"/>
    </location>
</feature>
<feature type="zinc finger region" description="C4-type">
    <location>
        <begin position="601"/>
        <end position="624"/>
    </location>
</feature>
<feature type="region of interest" description="Disordered" evidence="3">
    <location>
        <begin position="1"/>
        <end position="37"/>
    </location>
</feature>
<feature type="region of interest" description="Interaction with DNA" evidence="1">
    <location>
        <begin position="194"/>
        <end position="199"/>
    </location>
</feature>
<feature type="region of interest" description="Disordered" evidence="3">
    <location>
        <begin position="649"/>
        <end position="699"/>
    </location>
</feature>
<feature type="compositionally biased region" description="Basic and acidic residues" evidence="3">
    <location>
        <begin position="1"/>
        <end position="15"/>
    </location>
</feature>
<feature type="compositionally biased region" description="Basic and acidic residues" evidence="3">
    <location>
        <begin position="22"/>
        <end position="35"/>
    </location>
</feature>
<feature type="compositionally biased region" description="Polar residues" evidence="3">
    <location>
        <begin position="661"/>
        <end position="672"/>
    </location>
</feature>
<feature type="compositionally biased region" description="Basic residues" evidence="3">
    <location>
        <begin position="674"/>
        <end position="683"/>
    </location>
</feature>
<feature type="compositionally biased region" description="Low complexity" evidence="3">
    <location>
        <begin position="684"/>
        <end position="699"/>
    </location>
</feature>
<feature type="active site" description="O-(5'-phospho-DNA)-tyrosine intermediate" evidence="2">
    <location>
        <position position="324"/>
    </location>
</feature>
<feature type="binding site" evidence="1">
    <location>
        <position position="44"/>
    </location>
    <ligand>
        <name>Mg(2+)</name>
        <dbReference type="ChEBI" id="CHEBI:18420"/>
        <note>catalytic</note>
    </ligand>
</feature>
<feature type="binding site" evidence="1">
    <location>
        <position position="115"/>
    </location>
    <ligand>
        <name>Mg(2+)</name>
        <dbReference type="ChEBI" id="CHEBI:18420"/>
        <note>catalytic</note>
    </ligand>
</feature>
<feature type="site" description="Interaction with DNA" evidence="1">
    <location>
        <position position="68"/>
    </location>
</feature>
<feature type="site" description="Interaction with DNA" evidence="1">
    <location>
        <position position="170"/>
    </location>
</feature>
<feature type="site" description="Interaction with DNA" evidence="1">
    <location>
        <position position="171"/>
    </location>
</feature>
<feature type="site" description="Interaction with DNA" evidence="1">
    <location>
        <position position="174"/>
    </location>
</feature>
<feature type="site" description="Interaction with DNA" evidence="1">
    <location>
        <position position="179"/>
    </location>
</feature>
<feature type="site" description="Interaction with DNA" evidence="1">
    <location>
        <position position="186"/>
    </location>
</feature>
<feature type="site" description="Interaction with DNA" evidence="1">
    <location>
        <position position="326"/>
    </location>
</feature>
<feature type="site" description="Interaction with DNA" evidence="1">
    <location>
        <position position="515"/>
    </location>
</feature>
<proteinExistence type="inferred from homology"/>
<accession>O34204</accession>
<comment type="function">
    <text evidence="1">Releases the supercoiling and torsional tension of DNA, which is introduced during the DNA replication and transcription, by transiently cleaving and rejoining one strand of the DNA duplex. Introduces a single-strand break via transesterification at a target site in duplex DNA. The scissile phosphodiester is attacked by the catalytic tyrosine of the enzyme, resulting in the formation of a DNA-(5'-phosphotyrosyl)-enzyme intermediate and the expulsion of a 3'-OH DNA strand. The free DNA strand then undergoes passage around the unbroken strand, thus removing DNA supercoils. Finally, in the religation step, the DNA 3'-OH attacks the covalent intermediate to expel the active-site tyrosine and restore the DNA phosphodiester backbone.</text>
</comment>
<comment type="catalytic activity">
    <reaction evidence="1">
        <text>ATP-independent breakage of single-stranded DNA, followed by passage and rejoining.</text>
        <dbReference type="EC" id="5.6.2.1"/>
    </reaction>
</comment>
<comment type="cofactor">
    <cofactor evidence="1">
        <name>Mg(2+)</name>
        <dbReference type="ChEBI" id="CHEBI:18420"/>
    </cofactor>
</comment>
<comment type="subunit">
    <text evidence="1">Monomer.</text>
</comment>
<comment type="similarity">
    <text evidence="1">Belongs to the type IA topoisomerase family.</text>
</comment>
<sequence length="699" mass="79612">MAKSKVVEKDKKNELDNQSADIELKGQSKNEESKGGKKKVIIVESPAKAKTIERILGNDYQVISSKGHIRDLPQKQFGVDLNSLKLDFEIIPGKESVVEQIKKMTSGKEVLLPSDQDREGEAIAWHLSTILGVKGKNIITFTEITERAIKEAVKNPREIDMNKVNAQLARRVLDRIVGYMISPLLWRIIKDARSAGRVQSAALKIICERERERYRFVPQKYFKVWIDIAGLKAYLTKVDGKKIKPTDITEEISKDVLQKVKSVRLVDIDVKEVRKNPPAPFITSTLQQDAASKLGFPVSKTMKIAQELYEGVDTKEGHTAFITYMRTDSTRVSDVAKEAAEKFILKNFGREYLNESSEVASKKGSKTKGKVQDAHECIRPVDVNITPEKAKELLDKDHHKLYELIWKRFIASQMSSAIYKQYSYDFESGKYVFEASIRERIFDGFEKVYTIDNEPSEKHKELKVDQEYLVEPKSAEAQTTPPDRYTEASLVKTLEMEGIGRPSTYATIIQTLLDRGYVVKKRKTLIPTILGFVVNHYLEQRFPDIVDKGFTAEMEKELDEVENGKKDWKEVVKSFLKEFNKDLERAKNEFFAIDFDTDITCEDCSGNYKLKVGKYGLYLHCPNCKTNKALKSDVFGVIDGNKLYVLEEQESQEENGEKNSVQSEESSANSGNRKFYRKRRTSGSKKSSTKSASSKAKKK</sequence>